<gene>
    <name evidence="1" type="primary">argH</name>
    <name type="ordered locus">Dde_2530</name>
</gene>
<accession>Q30YB9</accession>
<comment type="catalytic activity">
    <reaction evidence="1">
        <text>2-(N(omega)-L-arginino)succinate = fumarate + L-arginine</text>
        <dbReference type="Rhea" id="RHEA:24020"/>
        <dbReference type="ChEBI" id="CHEBI:29806"/>
        <dbReference type="ChEBI" id="CHEBI:32682"/>
        <dbReference type="ChEBI" id="CHEBI:57472"/>
        <dbReference type="EC" id="4.3.2.1"/>
    </reaction>
</comment>
<comment type="pathway">
    <text evidence="1">Amino-acid biosynthesis; L-arginine biosynthesis; L-arginine from L-ornithine and carbamoyl phosphate: step 3/3.</text>
</comment>
<comment type="subcellular location">
    <subcellularLocation>
        <location evidence="1">Cytoplasm</location>
    </subcellularLocation>
</comment>
<comment type="similarity">
    <text evidence="1">Belongs to the lyase 1 family. Argininosuccinate lyase subfamily.</text>
</comment>
<keyword id="KW-0028">Amino-acid biosynthesis</keyword>
<keyword id="KW-0055">Arginine biosynthesis</keyword>
<keyword id="KW-0963">Cytoplasm</keyword>
<keyword id="KW-0456">Lyase</keyword>
<keyword id="KW-1185">Reference proteome</keyword>
<evidence type="ECO:0000255" key="1">
    <source>
        <dbReference type="HAMAP-Rule" id="MF_00006"/>
    </source>
</evidence>
<organism>
    <name type="scientific">Oleidesulfovibrio alaskensis (strain ATCC BAA-1058 / DSM 17464 / G20)</name>
    <name type="common">Desulfovibrio alaskensis</name>
    <dbReference type="NCBI Taxonomy" id="207559"/>
    <lineage>
        <taxon>Bacteria</taxon>
        <taxon>Pseudomonadati</taxon>
        <taxon>Thermodesulfobacteriota</taxon>
        <taxon>Desulfovibrionia</taxon>
        <taxon>Desulfovibrionales</taxon>
        <taxon>Desulfovibrionaceae</taxon>
        <taxon>Oleidesulfovibrio</taxon>
    </lineage>
</organism>
<protein>
    <recommendedName>
        <fullName evidence="1">Argininosuccinate lyase</fullName>
        <shortName evidence="1">ASAL</shortName>
        <ecNumber evidence="1">4.3.2.1</ecNumber>
    </recommendedName>
    <alternativeName>
        <fullName evidence="1">Arginosuccinase</fullName>
    </alternativeName>
</protein>
<feature type="chain" id="PRO_0000240726" description="Argininosuccinate lyase">
    <location>
        <begin position="1"/>
        <end position="460"/>
    </location>
</feature>
<proteinExistence type="inferred from homology"/>
<sequence>MTAGKLWGGRFRERTAGLVEEYTESVSYDRALYAQDIAGSKAHARMLARQGVISAGDAGRITEGLEQIRKEIESGEFVWRTEMEDVHMNIESRLTELVGDAGRRLHTGRSRNDQVALDFRLFVSDRIRVWKNLVRGVIAALTAQAHEHKDTLLPGCTHLQAAQPVSLAQHLLAYAWMLRRDYDRLEDCDRRVRICPLGAAALAGTTYPLDPQSVAAELDMYGVFNNSMDAVSDRDFALEAQFCGSLIMAHMSRLCEEIILWANPNFGYIFLPDAYATGSSIMPQKKNPDVAEIMRGKTGRVYGGLMSLLTTLKGLPMTYNRDLQEDKEPFIDTDRTVSASLEIMAGMVEALRFNTRRMENALRAGFLNATELADYLVGKGVPFRDAHHITGNAVALAEDRGKGLEDLTLEEFHSVSDLIGEDVFAVLDYRAAVERRCTHGGTGPASVAAQLAALQQWLSS</sequence>
<dbReference type="EC" id="4.3.2.1" evidence="1"/>
<dbReference type="EMBL" id="CP000112">
    <property type="protein sequence ID" value="ABB39327.1"/>
    <property type="molecule type" value="Genomic_DNA"/>
</dbReference>
<dbReference type="RefSeq" id="WP_011368379.1">
    <property type="nucleotide sequence ID" value="NC_007519.1"/>
</dbReference>
<dbReference type="SMR" id="Q30YB9"/>
<dbReference type="STRING" id="207559.Dde_2530"/>
<dbReference type="KEGG" id="dde:Dde_2530"/>
<dbReference type="eggNOG" id="COG0165">
    <property type="taxonomic scope" value="Bacteria"/>
</dbReference>
<dbReference type="HOGENOM" id="CLU_027272_2_3_7"/>
<dbReference type="UniPathway" id="UPA00068">
    <property type="reaction ID" value="UER00114"/>
</dbReference>
<dbReference type="Proteomes" id="UP000002710">
    <property type="component" value="Chromosome"/>
</dbReference>
<dbReference type="GO" id="GO:0005829">
    <property type="term" value="C:cytosol"/>
    <property type="evidence" value="ECO:0007669"/>
    <property type="project" value="TreeGrafter"/>
</dbReference>
<dbReference type="GO" id="GO:0004056">
    <property type="term" value="F:argininosuccinate lyase activity"/>
    <property type="evidence" value="ECO:0007669"/>
    <property type="project" value="UniProtKB-UniRule"/>
</dbReference>
<dbReference type="GO" id="GO:0042450">
    <property type="term" value="P:arginine biosynthetic process via ornithine"/>
    <property type="evidence" value="ECO:0007669"/>
    <property type="project" value="InterPro"/>
</dbReference>
<dbReference type="GO" id="GO:0006526">
    <property type="term" value="P:L-arginine biosynthetic process"/>
    <property type="evidence" value="ECO:0007669"/>
    <property type="project" value="UniProtKB-UniRule"/>
</dbReference>
<dbReference type="CDD" id="cd01359">
    <property type="entry name" value="Argininosuccinate_lyase"/>
    <property type="match status" value="1"/>
</dbReference>
<dbReference type="FunFam" id="1.10.275.10:FF:000002">
    <property type="entry name" value="Argininosuccinate lyase"/>
    <property type="match status" value="1"/>
</dbReference>
<dbReference type="FunFam" id="1.10.40.30:FF:000001">
    <property type="entry name" value="Argininosuccinate lyase"/>
    <property type="match status" value="1"/>
</dbReference>
<dbReference type="FunFam" id="1.20.200.10:FF:000015">
    <property type="entry name" value="argininosuccinate lyase isoform X2"/>
    <property type="match status" value="1"/>
</dbReference>
<dbReference type="Gene3D" id="1.10.40.30">
    <property type="entry name" value="Fumarase/aspartase (C-terminal domain)"/>
    <property type="match status" value="1"/>
</dbReference>
<dbReference type="Gene3D" id="1.20.200.10">
    <property type="entry name" value="Fumarase/aspartase (Central domain)"/>
    <property type="match status" value="1"/>
</dbReference>
<dbReference type="Gene3D" id="1.10.275.10">
    <property type="entry name" value="Fumarase/aspartase (N-terminal domain)"/>
    <property type="match status" value="1"/>
</dbReference>
<dbReference type="HAMAP" id="MF_00006">
    <property type="entry name" value="Arg_succ_lyase"/>
    <property type="match status" value="1"/>
</dbReference>
<dbReference type="InterPro" id="IPR029419">
    <property type="entry name" value="Arg_succ_lyase_C"/>
</dbReference>
<dbReference type="InterPro" id="IPR009049">
    <property type="entry name" value="Argininosuccinate_lyase"/>
</dbReference>
<dbReference type="InterPro" id="IPR024083">
    <property type="entry name" value="Fumarase/histidase_N"/>
</dbReference>
<dbReference type="InterPro" id="IPR020557">
    <property type="entry name" value="Fumarate_lyase_CS"/>
</dbReference>
<dbReference type="InterPro" id="IPR000362">
    <property type="entry name" value="Fumarate_lyase_fam"/>
</dbReference>
<dbReference type="InterPro" id="IPR022761">
    <property type="entry name" value="Fumarate_lyase_N"/>
</dbReference>
<dbReference type="InterPro" id="IPR008948">
    <property type="entry name" value="L-Aspartase-like"/>
</dbReference>
<dbReference type="NCBIfam" id="TIGR00838">
    <property type="entry name" value="argH"/>
    <property type="match status" value="1"/>
</dbReference>
<dbReference type="PANTHER" id="PTHR43814">
    <property type="entry name" value="ARGININOSUCCINATE LYASE"/>
    <property type="match status" value="1"/>
</dbReference>
<dbReference type="PANTHER" id="PTHR43814:SF1">
    <property type="entry name" value="ARGININOSUCCINATE LYASE"/>
    <property type="match status" value="1"/>
</dbReference>
<dbReference type="Pfam" id="PF14698">
    <property type="entry name" value="ASL_C2"/>
    <property type="match status" value="1"/>
</dbReference>
<dbReference type="Pfam" id="PF00206">
    <property type="entry name" value="Lyase_1"/>
    <property type="match status" value="1"/>
</dbReference>
<dbReference type="PRINTS" id="PR00145">
    <property type="entry name" value="ARGSUCLYASE"/>
</dbReference>
<dbReference type="PRINTS" id="PR00149">
    <property type="entry name" value="FUMRATELYASE"/>
</dbReference>
<dbReference type="SUPFAM" id="SSF48557">
    <property type="entry name" value="L-aspartase-like"/>
    <property type="match status" value="1"/>
</dbReference>
<dbReference type="PROSITE" id="PS00163">
    <property type="entry name" value="FUMARATE_LYASES"/>
    <property type="match status" value="1"/>
</dbReference>
<name>ARLY_OLEA2</name>
<reference key="1">
    <citation type="journal article" date="2011" name="J. Bacteriol.">
        <title>Complete genome sequence and updated annotation of Desulfovibrio alaskensis G20.</title>
        <authorList>
            <person name="Hauser L.J."/>
            <person name="Land M.L."/>
            <person name="Brown S.D."/>
            <person name="Larimer F."/>
            <person name="Keller K.L."/>
            <person name="Rapp-Giles B.J."/>
            <person name="Price M.N."/>
            <person name="Lin M."/>
            <person name="Bruce D.C."/>
            <person name="Detter J.C."/>
            <person name="Tapia R."/>
            <person name="Han C.S."/>
            <person name="Goodwin L.A."/>
            <person name="Cheng J.F."/>
            <person name="Pitluck S."/>
            <person name="Copeland A."/>
            <person name="Lucas S."/>
            <person name="Nolan M."/>
            <person name="Lapidus A.L."/>
            <person name="Palumbo A.V."/>
            <person name="Wall J.D."/>
        </authorList>
    </citation>
    <scope>NUCLEOTIDE SEQUENCE [LARGE SCALE GENOMIC DNA]</scope>
    <source>
        <strain>ATCC BAA-1058 / DSM 17464 / G20</strain>
    </source>
</reference>